<dbReference type="EMBL" id="AACD01000069">
    <property type="protein sequence ID" value="EAA58938.1"/>
    <property type="molecule type" value="Genomic_DNA"/>
</dbReference>
<dbReference type="EMBL" id="BN001302">
    <property type="protein sequence ID" value="CBF74351.1"/>
    <property type="molecule type" value="Genomic_DNA"/>
</dbReference>
<dbReference type="RefSeq" id="XP_661874.1">
    <property type="nucleotide sequence ID" value="XM_656782.1"/>
</dbReference>
<dbReference type="SMR" id="Q5B5B0"/>
<dbReference type="FunCoup" id="Q5B5B0">
    <property type="interactions" value="57"/>
</dbReference>
<dbReference type="STRING" id="227321.Q5B5B0"/>
<dbReference type="EnsemblFungi" id="CBF74351">
    <property type="protein sequence ID" value="CBF74351"/>
    <property type="gene ID" value="ANIA_04270"/>
</dbReference>
<dbReference type="KEGG" id="ani:ANIA_04270"/>
<dbReference type="VEuPathDB" id="FungiDB:AN4270"/>
<dbReference type="eggNOG" id="KOG0998">
    <property type="taxonomic scope" value="Eukaryota"/>
</dbReference>
<dbReference type="HOGENOM" id="CLU_001963_1_0_1"/>
<dbReference type="InParanoid" id="Q5B5B0"/>
<dbReference type="OMA" id="GMPGQWG"/>
<dbReference type="OrthoDB" id="2015333at2759"/>
<dbReference type="Proteomes" id="UP000000560">
    <property type="component" value="Chromosome II"/>
</dbReference>
<dbReference type="GO" id="GO:0030479">
    <property type="term" value="C:actin cortical patch"/>
    <property type="evidence" value="ECO:0007669"/>
    <property type="project" value="UniProtKB-SubCell"/>
</dbReference>
<dbReference type="GO" id="GO:0005737">
    <property type="term" value="C:cytoplasm"/>
    <property type="evidence" value="ECO:0000318"/>
    <property type="project" value="GO_Central"/>
</dbReference>
<dbReference type="GO" id="GO:0010008">
    <property type="term" value="C:endosome membrane"/>
    <property type="evidence" value="ECO:0007669"/>
    <property type="project" value="UniProtKB-SubCell"/>
</dbReference>
<dbReference type="GO" id="GO:0005886">
    <property type="term" value="C:plasma membrane"/>
    <property type="evidence" value="ECO:0000318"/>
    <property type="project" value="GO_Central"/>
</dbReference>
<dbReference type="GO" id="GO:0003779">
    <property type="term" value="F:actin binding"/>
    <property type="evidence" value="ECO:0007669"/>
    <property type="project" value="UniProtKB-KW"/>
</dbReference>
<dbReference type="GO" id="GO:0005509">
    <property type="term" value="F:calcium ion binding"/>
    <property type="evidence" value="ECO:0007669"/>
    <property type="project" value="InterPro"/>
</dbReference>
<dbReference type="GO" id="GO:0006897">
    <property type="term" value="P:endocytosis"/>
    <property type="evidence" value="ECO:0000318"/>
    <property type="project" value="GO_Central"/>
</dbReference>
<dbReference type="GO" id="GO:0016197">
    <property type="term" value="P:endosomal transport"/>
    <property type="evidence" value="ECO:0000318"/>
    <property type="project" value="GO_Central"/>
</dbReference>
<dbReference type="CDD" id="cd00052">
    <property type="entry name" value="EH"/>
    <property type="match status" value="2"/>
</dbReference>
<dbReference type="FunFam" id="1.10.238.10:FF:000349">
    <property type="entry name" value="Actin cytoskeleton-regulatory complex protein PAN1"/>
    <property type="match status" value="1"/>
</dbReference>
<dbReference type="Gene3D" id="1.10.238.10">
    <property type="entry name" value="EF-hand"/>
    <property type="match status" value="2"/>
</dbReference>
<dbReference type="InterPro" id="IPR011992">
    <property type="entry name" value="EF-hand-dom_pair"/>
</dbReference>
<dbReference type="InterPro" id="IPR002048">
    <property type="entry name" value="EF_hand_dom"/>
</dbReference>
<dbReference type="InterPro" id="IPR000261">
    <property type="entry name" value="EH_dom"/>
</dbReference>
<dbReference type="InterPro" id="IPR003124">
    <property type="entry name" value="WH2_dom"/>
</dbReference>
<dbReference type="PANTHER" id="PTHR11216:SF170">
    <property type="entry name" value="DYNAMIN ASSOCIATED PROTEIN 160, ISOFORM D"/>
    <property type="match status" value="1"/>
</dbReference>
<dbReference type="PANTHER" id="PTHR11216">
    <property type="entry name" value="EH DOMAIN"/>
    <property type="match status" value="1"/>
</dbReference>
<dbReference type="Pfam" id="PF12763">
    <property type="entry name" value="EH"/>
    <property type="match status" value="2"/>
</dbReference>
<dbReference type="Pfam" id="PF02205">
    <property type="entry name" value="WH2"/>
    <property type="match status" value="1"/>
</dbReference>
<dbReference type="PRINTS" id="PR01217">
    <property type="entry name" value="PRICHEXTENSN"/>
</dbReference>
<dbReference type="SMART" id="SM00027">
    <property type="entry name" value="EH"/>
    <property type="match status" value="2"/>
</dbReference>
<dbReference type="SMART" id="SM00246">
    <property type="entry name" value="WH2"/>
    <property type="match status" value="1"/>
</dbReference>
<dbReference type="SUPFAM" id="SSF47473">
    <property type="entry name" value="EF-hand"/>
    <property type="match status" value="2"/>
</dbReference>
<dbReference type="PROSITE" id="PS50222">
    <property type="entry name" value="EF_HAND_2"/>
    <property type="match status" value="2"/>
</dbReference>
<dbReference type="PROSITE" id="PS50031">
    <property type="entry name" value="EH"/>
    <property type="match status" value="2"/>
</dbReference>
<dbReference type="PROSITE" id="PS51082">
    <property type="entry name" value="WH2"/>
    <property type="match status" value="1"/>
</dbReference>
<accession>Q5B5B0</accession>
<accession>C8V406</accession>
<keyword id="KW-0009">Actin-binding</keyword>
<keyword id="KW-1003">Cell membrane</keyword>
<keyword id="KW-0175">Coiled coil</keyword>
<keyword id="KW-0963">Cytoplasm</keyword>
<keyword id="KW-0206">Cytoskeleton</keyword>
<keyword id="KW-0254">Endocytosis</keyword>
<keyword id="KW-0967">Endosome</keyword>
<keyword id="KW-0472">Membrane</keyword>
<keyword id="KW-1185">Reference proteome</keyword>
<keyword id="KW-0677">Repeat</keyword>
<organism>
    <name type="scientific">Emericella nidulans (strain FGSC A4 / ATCC 38163 / CBS 112.46 / NRRL 194 / M139)</name>
    <name type="common">Aspergillus nidulans</name>
    <dbReference type="NCBI Taxonomy" id="227321"/>
    <lineage>
        <taxon>Eukaryota</taxon>
        <taxon>Fungi</taxon>
        <taxon>Dikarya</taxon>
        <taxon>Ascomycota</taxon>
        <taxon>Pezizomycotina</taxon>
        <taxon>Eurotiomycetes</taxon>
        <taxon>Eurotiomycetidae</taxon>
        <taxon>Eurotiales</taxon>
        <taxon>Aspergillaceae</taxon>
        <taxon>Aspergillus</taxon>
        <taxon>Aspergillus subgen. Nidulantes</taxon>
    </lineage>
</organism>
<feature type="chain" id="PRO_0000349476" description="Actin cytoskeleton-regulatory complex protein pan1">
    <location>
        <begin position="1"/>
        <end position="1484"/>
    </location>
</feature>
<feature type="domain" description="EH 1" evidence="3">
    <location>
        <begin position="173"/>
        <end position="261"/>
    </location>
</feature>
<feature type="domain" description="EF-hand 1" evidence="5">
    <location>
        <begin position="205"/>
        <end position="240"/>
    </location>
</feature>
<feature type="domain" description="EH 2" evidence="3">
    <location>
        <begin position="460"/>
        <end position="549"/>
    </location>
</feature>
<feature type="domain" description="EF-hand 2" evidence="5">
    <location>
        <begin position="493"/>
        <end position="528"/>
    </location>
</feature>
<feature type="domain" description="WH2" evidence="4">
    <location>
        <begin position="1452"/>
        <end position="1469"/>
    </location>
</feature>
<feature type="region of interest" description="Disordered" evidence="6">
    <location>
        <begin position="1"/>
        <end position="100"/>
    </location>
</feature>
<feature type="region of interest" description="Disordered" evidence="6">
    <location>
        <begin position="289"/>
        <end position="331"/>
    </location>
</feature>
<feature type="region of interest" description="Disordered" evidence="6">
    <location>
        <begin position="351"/>
        <end position="384"/>
    </location>
</feature>
<feature type="region of interest" description="Disordered" evidence="6">
    <location>
        <begin position="615"/>
        <end position="643"/>
    </location>
</feature>
<feature type="region of interest" description="Disordered" evidence="6">
    <location>
        <begin position="793"/>
        <end position="866"/>
    </location>
</feature>
<feature type="region of interest" description="Disordered" evidence="6">
    <location>
        <begin position="893"/>
        <end position="1484"/>
    </location>
</feature>
<feature type="coiled-coil region" evidence="2">
    <location>
        <begin position="635"/>
        <end position="760"/>
    </location>
</feature>
<feature type="coiled-coil region" evidence="2">
    <location>
        <begin position="807"/>
        <end position="843"/>
    </location>
</feature>
<feature type="coiled-coil region" evidence="2">
    <location>
        <begin position="965"/>
        <end position="1011"/>
    </location>
</feature>
<feature type="coiled-coil region" evidence="2">
    <location>
        <begin position="1052"/>
        <end position="1165"/>
    </location>
</feature>
<feature type="compositionally biased region" description="Polar residues" evidence="6">
    <location>
        <begin position="1"/>
        <end position="16"/>
    </location>
</feature>
<feature type="compositionally biased region" description="Low complexity" evidence="6">
    <location>
        <begin position="17"/>
        <end position="47"/>
    </location>
</feature>
<feature type="compositionally biased region" description="Polar residues" evidence="6">
    <location>
        <begin position="49"/>
        <end position="67"/>
    </location>
</feature>
<feature type="compositionally biased region" description="Pro residues" evidence="6">
    <location>
        <begin position="296"/>
        <end position="305"/>
    </location>
</feature>
<feature type="compositionally biased region" description="Low complexity" evidence="6">
    <location>
        <begin position="306"/>
        <end position="316"/>
    </location>
</feature>
<feature type="compositionally biased region" description="Polar residues" evidence="6">
    <location>
        <begin position="352"/>
        <end position="370"/>
    </location>
</feature>
<feature type="compositionally biased region" description="Polar residues" evidence="6">
    <location>
        <begin position="628"/>
        <end position="639"/>
    </location>
</feature>
<feature type="compositionally biased region" description="Basic and acidic residues" evidence="6">
    <location>
        <begin position="811"/>
        <end position="866"/>
    </location>
</feature>
<feature type="compositionally biased region" description="Basic and acidic residues" evidence="6">
    <location>
        <begin position="894"/>
        <end position="913"/>
    </location>
</feature>
<feature type="compositionally biased region" description="Basic and acidic residues" evidence="6">
    <location>
        <begin position="937"/>
        <end position="955"/>
    </location>
</feature>
<feature type="compositionally biased region" description="Basic and acidic residues" evidence="6">
    <location>
        <begin position="975"/>
        <end position="1010"/>
    </location>
</feature>
<feature type="compositionally biased region" description="Basic and acidic residues" evidence="6">
    <location>
        <begin position="1063"/>
        <end position="1152"/>
    </location>
</feature>
<feature type="compositionally biased region" description="Acidic residues" evidence="6">
    <location>
        <begin position="1157"/>
        <end position="1169"/>
    </location>
</feature>
<feature type="compositionally biased region" description="Polar residues" evidence="6">
    <location>
        <begin position="1175"/>
        <end position="1187"/>
    </location>
</feature>
<feature type="compositionally biased region" description="Pro residues" evidence="6">
    <location>
        <begin position="1192"/>
        <end position="1208"/>
    </location>
</feature>
<feature type="compositionally biased region" description="Low complexity" evidence="6">
    <location>
        <begin position="1209"/>
        <end position="1222"/>
    </location>
</feature>
<feature type="compositionally biased region" description="Pro residues" evidence="6">
    <location>
        <begin position="1249"/>
        <end position="1258"/>
    </location>
</feature>
<feature type="compositionally biased region" description="Polar residues" evidence="6">
    <location>
        <begin position="1265"/>
        <end position="1274"/>
    </location>
</feature>
<feature type="compositionally biased region" description="Acidic residues" evidence="6">
    <location>
        <begin position="1310"/>
        <end position="1329"/>
    </location>
</feature>
<feature type="compositionally biased region" description="Polar residues" evidence="6">
    <location>
        <begin position="1356"/>
        <end position="1371"/>
    </location>
</feature>
<feature type="compositionally biased region" description="Low complexity" evidence="6">
    <location>
        <begin position="1382"/>
        <end position="1393"/>
    </location>
</feature>
<feature type="compositionally biased region" description="Pro residues" evidence="6">
    <location>
        <begin position="1394"/>
        <end position="1415"/>
    </location>
</feature>
<feature type="compositionally biased region" description="Pro residues" evidence="6">
    <location>
        <begin position="1422"/>
        <end position="1445"/>
    </location>
</feature>
<feature type="compositionally biased region" description="Polar residues" evidence="6">
    <location>
        <begin position="1472"/>
        <end position="1484"/>
    </location>
</feature>
<evidence type="ECO:0000250" key="1"/>
<evidence type="ECO:0000255" key="2"/>
<evidence type="ECO:0000255" key="3">
    <source>
        <dbReference type="PROSITE-ProRule" id="PRU00077"/>
    </source>
</evidence>
<evidence type="ECO:0000255" key="4">
    <source>
        <dbReference type="PROSITE-ProRule" id="PRU00406"/>
    </source>
</evidence>
<evidence type="ECO:0000255" key="5">
    <source>
        <dbReference type="PROSITE-ProRule" id="PRU00448"/>
    </source>
</evidence>
<evidence type="ECO:0000256" key="6">
    <source>
        <dbReference type="SAM" id="MobiDB-lite"/>
    </source>
</evidence>
<evidence type="ECO:0000305" key="7"/>
<proteinExistence type="inferred from homology"/>
<gene>
    <name type="primary">pan1</name>
    <name type="ORF">AN4270</name>
</gene>
<comment type="function">
    <text evidence="1">Component of the PAN1 actin cytoskeleton-regulatory complex required for the internalization of endosomes during actin-coupled endocytosis. The complex links the site of endocytosis to the cell membrane-associated actin cytoskeleton. Mediates uptake of external molecules and vacuolar degradation of plasma membrane proteins. Plays a role in the proper organization of the cell membrane-associated actin cytoskeleton and promotes its destabilization (By similarity).</text>
</comment>
<comment type="subunit">
    <text evidence="1">Component of the PAN1 actin cytoskeleton-regulatory complex.</text>
</comment>
<comment type="subcellular location">
    <subcellularLocation>
        <location evidence="1">Cell membrane</location>
        <topology evidence="1">Peripheral membrane protein</topology>
        <orientation evidence="1">Cytoplasmic side</orientation>
    </subcellularLocation>
    <subcellularLocation>
        <location evidence="1">Endosome membrane</location>
        <topology evidence="1">Peripheral membrane protein</topology>
        <orientation evidence="1">Cytoplasmic side</orientation>
    </subcellularLocation>
    <subcellularLocation>
        <location evidence="1">Cytoplasm</location>
        <location evidence="1">Cytoskeleton</location>
        <location evidence="1">Actin patch</location>
    </subcellularLocation>
    <text evidence="1">Cytoplasmic and cortical actin patches.</text>
</comment>
<comment type="similarity">
    <text evidence="7">Belongs to the PAN1 family.</text>
</comment>
<protein>
    <recommendedName>
        <fullName>Actin cytoskeleton-regulatory complex protein pan1</fullName>
    </recommendedName>
</protein>
<reference key="1">
    <citation type="journal article" date="2005" name="Nature">
        <title>Sequencing of Aspergillus nidulans and comparative analysis with A. fumigatus and A. oryzae.</title>
        <authorList>
            <person name="Galagan J.E."/>
            <person name="Calvo S.E."/>
            <person name="Cuomo C."/>
            <person name="Ma L.-J."/>
            <person name="Wortman J.R."/>
            <person name="Batzoglou S."/>
            <person name="Lee S.-I."/>
            <person name="Bastuerkmen M."/>
            <person name="Spevak C.C."/>
            <person name="Clutterbuck J."/>
            <person name="Kapitonov V."/>
            <person name="Jurka J."/>
            <person name="Scazzocchio C."/>
            <person name="Farman M.L."/>
            <person name="Butler J."/>
            <person name="Purcell S."/>
            <person name="Harris S."/>
            <person name="Braus G.H."/>
            <person name="Draht O."/>
            <person name="Busch S."/>
            <person name="D'Enfert C."/>
            <person name="Bouchier C."/>
            <person name="Goldman G.H."/>
            <person name="Bell-Pedersen D."/>
            <person name="Griffiths-Jones S."/>
            <person name="Doonan J.H."/>
            <person name="Yu J."/>
            <person name="Vienken K."/>
            <person name="Pain A."/>
            <person name="Freitag M."/>
            <person name="Selker E.U."/>
            <person name="Archer D.B."/>
            <person name="Penalva M.A."/>
            <person name="Oakley B.R."/>
            <person name="Momany M."/>
            <person name="Tanaka T."/>
            <person name="Kumagai T."/>
            <person name="Asai K."/>
            <person name="Machida M."/>
            <person name="Nierman W.C."/>
            <person name="Denning D.W."/>
            <person name="Caddick M.X."/>
            <person name="Hynes M."/>
            <person name="Paoletti M."/>
            <person name="Fischer R."/>
            <person name="Miller B.L."/>
            <person name="Dyer P.S."/>
            <person name="Sachs M.S."/>
            <person name="Osmani S.A."/>
            <person name="Birren B.W."/>
        </authorList>
    </citation>
    <scope>NUCLEOTIDE SEQUENCE [LARGE SCALE GENOMIC DNA]</scope>
    <source>
        <strain>FGSC A4 / ATCC 38163 / CBS 112.46 / NRRL 194 / M139</strain>
    </source>
</reference>
<reference key="2">
    <citation type="journal article" date="2009" name="Fungal Genet. Biol.">
        <title>The 2008 update of the Aspergillus nidulans genome annotation: a community effort.</title>
        <authorList>
            <person name="Wortman J.R."/>
            <person name="Gilsenan J.M."/>
            <person name="Joardar V."/>
            <person name="Deegan J."/>
            <person name="Clutterbuck J."/>
            <person name="Andersen M.R."/>
            <person name="Archer D."/>
            <person name="Bencina M."/>
            <person name="Braus G."/>
            <person name="Coutinho P."/>
            <person name="von Dohren H."/>
            <person name="Doonan J."/>
            <person name="Driessen A.J."/>
            <person name="Durek P."/>
            <person name="Espeso E."/>
            <person name="Fekete E."/>
            <person name="Flipphi M."/>
            <person name="Estrada C.G."/>
            <person name="Geysens S."/>
            <person name="Goldman G."/>
            <person name="de Groot P.W."/>
            <person name="Hansen K."/>
            <person name="Harris S.D."/>
            <person name="Heinekamp T."/>
            <person name="Helmstaedt K."/>
            <person name="Henrissat B."/>
            <person name="Hofmann G."/>
            <person name="Homan T."/>
            <person name="Horio T."/>
            <person name="Horiuchi H."/>
            <person name="James S."/>
            <person name="Jones M."/>
            <person name="Karaffa L."/>
            <person name="Karanyi Z."/>
            <person name="Kato M."/>
            <person name="Keller N."/>
            <person name="Kelly D.E."/>
            <person name="Kiel J.A."/>
            <person name="Kim J.M."/>
            <person name="van der Klei I.J."/>
            <person name="Klis F.M."/>
            <person name="Kovalchuk A."/>
            <person name="Krasevec N."/>
            <person name="Kubicek C.P."/>
            <person name="Liu B."/>
            <person name="Maccabe A."/>
            <person name="Meyer V."/>
            <person name="Mirabito P."/>
            <person name="Miskei M."/>
            <person name="Mos M."/>
            <person name="Mullins J."/>
            <person name="Nelson D.R."/>
            <person name="Nielsen J."/>
            <person name="Oakley B.R."/>
            <person name="Osmani S.A."/>
            <person name="Pakula T."/>
            <person name="Paszewski A."/>
            <person name="Paulsen I."/>
            <person name="Pilsyk S."/>
            <person name="Pocsi I."/>
            <person name="Punt P.J."/>
            <person name="Ram A.F."/>
            <person name="Ren Q."/>
            <person name="Robellet X."/>
            <person name="Robson G."/>
            <person name="Seiboth B."/>
            <person name="van Solingen P."/>
            <person name="Specht T."/>
            <person name="Sun J."/>
            <person name="Taheri-Talesh N."/>
            <person name="Takeshita N."/>
            <person name="Ussery D."/>
            <person name="vanKuyk P.A."/>
            <person name="Visser H."/>
            <person name="van de Vondervoort P.J."/>
            <person name="de Vries R.P."/>
            <person name="Walton J."/>
            <person name="Xiang X."/>
            <person name="Xiong Y."/>
            <person name="Zeng A.P."/>
            <person name="Brandt B.W."/>
            <person name="Cornell M.J."/>
            <person name="van den Hondel C.A."/>
            <person name="Visser J."/>
            <person name="Oliver S.G."/>
            <person name="Turner G."/>
        </authorList>
    </citation>
    <scope>GENOME REANNOTATION</scope>
    <source>
        <strain>FGSC A4 / ATCC 38163 / CBS 112.46 / NRRL 194 / M139</strain>
    </source>
</reference>
<sequence>MYSSSNSFLGGANSTRPGQQPYMQQQPPFSQFGQQQPQNQQTGLAPQPTGYNPQFSALGASQLQPQATGFPPGQIQPQYTGFPGVSPQPQQTQPTGFPASPQQTQYGGFPSLGQAPQIQVTSNTNIPLRTGQQTSSEIANSFQNASVATPTPPPKASGGKIPNIRLSFITAQDQAKFEQLFKSAVGDSQAMTGDKAKELLLRSKLPGSDLSRIWVLSDTTKSGQLLFPEFALAMYLCNLRITGRDIPSVLPETIKNEVSSMVDIISFQVPDTQPEPVAKTNVPSFDAPLLENKLAPPAPQQPRPQQPSNSQLLSQLTAQPTGFPPSSGYQANVAVQGQNQGLVPQATVFPGQASSQNLQPPQMGILNNPQPTGYTGPRPPMPPMPTGFGSNLSPSQTGGLVAQPTGIPGQWGFVNAPASGLPNIEALKQQLMPQPGREGGFSAAGLSGNASIPWAITKEEKKIYDDLFRAWDGLHKGFIGGDTAIEIMGQSGLARNDLEAIWTLADPHNRGRLNMDEFAVAMHLIYRKLNGYPVPNRLPPELIPPSTRNLNDSIGTIKSMLSQDAEHRKATGAFLQPQKTGVSYLKEHSFRGGAVSPGAGRKDATLFKNNDEAAAGYRSSARRRVGNSGRTPSPAASQASEEELSVEQLKKKIRETQIMLDAVDFEDENRAEEEDALDRRDRREAESLMDRIRRVQDDIDTHPHAALRSLDTGAERRTLRRQLQAYEDQVPQIASEVRRVEREIAEAKLELFRLKDAKAHPNSALNIVGTGPGGAVTEADRIKARARARMQARAAELAGRPAPASQDDEEAATRRLEGENARVKAEREKNDSMTRDVEESVKEFARSLEDSLKEGEESSTREHERRRWEDALGVEDVIRDFIYDLNRGSRTAHIRKEEDSRGSSLEPRSRESSAHTSTAARPSPPASVGLTGASPVTHEDRVAAARERAQRRIAERMAAAGLKPQTDAIETLAQRQERERREREERVKRAEEEDAKREQERQRRIAEEQRTPSTQAAKPAGKKPPPAPPRGSRKGRTDSTGQADAKKAAEGSAKTEQLALEQALKEEQQAQEEETKRLETEAKQREDEFAREQQEQEARLRALEEQVRQGKIKKQEEKRRREEAKKAAQEQEARLARQRAELEAAKERERQLQLELEGLDESSSDEEGPVDIATPQDSTPTQSQVLPATSDPEPPAPPTPVAEPPTVPEPEQTTASSSPESSRAVSLRLSPETESKNPYFRRNVSQPTDYPPPTPPEVPQVSSTQMPDTQSTNPFHRLAQQQQPPPPPPTQPAFTGSAPLARKTRARPEADDDWSAAESDFESSDDEDDRAGGGSAKQLASILFGTMAPPRPLSAMDTQSPSSKSATPVQGSSIPPVPPIPAEIEPSSVADGASPPPPPPPPPPPPPAAAPPPLPSAESPAGIPPPPPPPMAPPAPPPPPGPPAAAPAGAPDRSALLASIQAGKGLRKVQTNDRSTSTSAGRVL</sequence>
<name>PAN1_EMENI</name>